<keyword id="KW-0007">Acetylation</keyword>
<keyword id="KW-0067">ATP-binding</keyword>
<keyword id="KW-0963">Cytoplasm</keyword>
<keyword id="KW-0217">Developmental protein</keyword>
<keyword id="KW-0967">Endosome</keyword>
<keyword id="KW-0418">Kinase</keyword>
<keyword id="KW-0472">Membrane</keyword>
<keyword id="KW-0479">Metal-binding</keyword>
<keyword id="KW-0547">Nucleotide-binding</keyword>
<keyword id="KW-0539">Nucleus</keyword>
<keyword id="KW-0597">Phosphoprotein</keyword>
<keyword id="KW-0656">Proto-oncogene</keyword>
<keyword id="KW-1185">Reference proteome</keyword>
<keyword id="KW-0723">Serine/threonine-protein kinase</keyword>
<keyword id="KW-0808">Transferase</keyword>
<keyword id="KW-0043">Tumor suppressor</keyword>
<keyword id="KW-0862">Zinc</keyword>
<keyword id="KW-0863">Zinc-finger</keyword>
<accession>F1M7Y5</accession>
<accession>B1PZT8</accession>
<gene>
    <name type="primary">Prkci</name>
    <name type="synonym">Pkcl</name>
</gene>
<evidence type="ECO:0000250" key="1"/>
<evidence type="ECO:0000250" key="2">
    <source>
        <dbReference type="UniProtKB" id="P41743"/>
    </source>
</evidence>
<evidence type="ECO:0000250" key="3">
    <source>
        <dbReference type="UniProtKB" id="Q62074"/>
    </source>
</evidence>
<evidence type="ECO:0000255" key="4">
    <source>
        <dbReference type="PROSITE-ProRule" id="PRU00159"/>
    </source>
</evidence>
<evidence type="ECO:0000255" key="5">
    <source>
        <dbReference type="PROSITE-ProRule" id="PRU00226"/>
    </source>
</evidence>
<evidence type="ECO:0000255" key="6">
    <source>
        <dbReference type="PROSITE-ProRule" id="PRU00618"/>
    </source>
</evidence>
<evidence type="ECO:0000255" key="7">
    <source>
        <dbReference type="PROSITE-ProRule" id="PRU01081"/>
    </source>
</evidence>
<evidence type="ECO:0000255" key="8">
    <source>
        <dbReference type="PROSITE-ProRule" id="PRU10027"/>
    </source>
</evidence>
<evidence type="ECO:0000256" key="9">
    <source>
        <dbReference type="SAM" id="MobiDB-lite"/>
    </source>
</evidence>
<evidence type="ECO:0000269" key="10">
    <source>
    </source>
</evidence>
<evidence type="ECO:0000269" key="11">
    <source>
    </source>
</evidence>
<evidence type="ECO:0000305" key="12"/>
<evidence type="ECO:0007744" key="13">
    <source>
    </source>
</evidence>
<reference key="1">
    <citation type="journal article" date="2004" name="Nature">
        <title>Genome sequence of the Brown Norway rat yields insights into mammalian evolution.</title>
        <authorList>
            <person name="Gibbs R.A."/>
            <person name="Weinstock G.M."/>
            <person name="Metzker M.L."/>
            <person name="Muzny D.M."/>
            <person name="Sodergren E.J."/>
            <person name="Scherer S."/>
            <person name="Scott G."/>
            <person name="Steffen D."/>
            <person name="Worley K.C."/>
            <person name="Burch P.E."/>
            <person name="Okwuonu G."/>
            <person name="Hines S."/>
            <person name="Lewis L."/>
            <person name="Deramo C."/>
            <person name="Delgado O."/>
            <person name="Dugan-Rocha S."/>
            <person name="Miner G."/>
            <person name="Morgan M."/>
            <person name="Hawes A."/>
            <person name="Gill R."/>
            <person name="Holt R.A."/>
            <person name="Adams M.D."/>
            <person name="Amanatides P.G."/>
            <person name="Baden-Tillson H."/>
            <person name="Barnstead M."/>
            <person name="Chin S."/>
            <person name="Evans C.A."/>
            <person name="Ferriera S."/>
            <person name="Fosler C."/>
            <person name="Glodek A."/>
            <person name="Gu Z."/>
            <person name="Jennings D."/>
            <person name="Kraft C.L."/>
            <person name="Nguyen T."/>
            <person name="Pfannkoch C.M."/>
            <person name="Sitter C."/>
            <person name="Sutton G.G."/>
            <person name="Venter J.C."/>
            <person name="Woodage T."/>
            <person name="Smith D."/>
            <person name="Lee H.-M."/>
            <person name="Gustafson E."/>
            <person name="Cahill P."/>
            <person name="Kana A."/>
            <person name="Doucette-Stamm L."/>
            <person name="Weinstock K."/>
            <person name="Fechtel K."/>
            <person name="Weiss R.B."/>
            <person name="Dunn D.M."/>
            <person name="Green E.D."/>
            <person name="Blakesley R.W."/>
            <person name="Bouffard G.G."/>
            <person name="De Jong P.J."/>
            <person name="Osoegawa K."/>
            <person name="Zhu B."/>
            <person name="Marra M."/>
            <person name="Schein J."/>
            <person name="Bosdet I."/>
            <person name="Fjell C."/>
            <person name="Jones S."/>
            <person name="Krzywinski M."/>
            <person name="Mathewson C."/>
            <person name="Siddiqui A."/>
            <person name="Wye N."/>
            <person name="McPherson J."/>
            <person name="Zhao S."/>
            <person name="Fraser C.M."/>
            <person name="Shetty J."/>
            <person name="Shatsman S."/>
            <person name="Geer K."/>
            <person name="Chen Y."/>
            <person name="Abramzon S."/>
            <person name="Nierman W.C."/>
            <person name="Havlak P.H."/>
            <person name="Chen R."/>
            <person name="Durbin K.J."/>
            <person name="Egan A."/>
            <person name="Ren Y."/>
            <person name="Song X.-Z."/>
            <person name="Li B."/>
            <person name="Liu Y."/>
            <person name="Qin X."/>
            <person name="Cawley S."/>
            <person name="Cooney A.J."/>
            <person name="D'Souza L.M."/>
            <person name="Martin K."/>
            <person name="Wu J.Q."/>
            <person name="Gonzalez-Garay M.L."/>
            <person name="Jackson A.R."/>
            <person name="Kalafus K.J."/>
            <person name="McLeod M.P."/>
            <person name="Milosavljevic A."/>
            <person name="Virk D."/>
            <person name="Volkov A."/>
            <person name="Wheeler D.A."/>
            <person name="Zhang Z."/>
            <person name="Bailey J.A."/>
            <person name="Eichler E.E."/>
            <person name="Tuzun E."/>
            <person name="Birney E."/>
            <person name="Mongin E."/>
            <person name="Ureta-Vidal A."/>
            <person name="Woodwark C."/>
            <person name="Zdobnov E."/>
            <person name="Bork P."/>
            <person name="Suyama M."/>
            <person name="Torrents D."/>
            <person name="Alexandersson M."/>
            <person name="Trask B.J."/>
            <person name="Young J.M."/>
            <person name="Huang H."/>
            <person name="Wang H."/>
            <person name="Xing H."/>
            <person name="Daniels S."/>
            <person name="Gietzen D."/>
            <person name="Schmidt J."/>
            <person name="Stevens K."/>
            <person name="Vitt U."/>
            <person name="Wingrove J."/>
            <person name="Camara F."/>
            <person name="Mar Alba M."/>
            <person name="Abril J.F."/>
            <person name="Guigo R."/>
            <person name="Smit A."/>
            <person name="Dubchak I."/>
            <person name="Rubin E.M."/>
            <person name="Couronne O."/>
            <person name="Poliakov A."/>
            <person name="Huebner N."/>
            <person name="Ganten D."/>
            <person name="Goesele C."/>
            <person name="Hummel O."/>
            <person name="Kreitler T."/>
            <person name="Lee Y.-A."/>
            <person name="Monti J."/>
            <person name="Schulz H."/>
            <person name="Zimdahl H."/>
            <person name="Himmelbauer H."/>
            <person name="Lehrach H."/>
            <person name="Jacob H.J."/>
            <person name="Bromberg S."/>
            <person name="Gullings-Handley J."/>
            <person name="Jensen-Seaman M.I."/>
            <person name="Kwitek A.E."/>
            <person name="Lazar J."/>
            <person name="Pasko D."/>
            <person name="Tonellato P.J."/>
            <person name="Twigger S."/>
            <person name="Ponting C.P."/>
            <person name="Duarte J.M."/>
            <person name="Rice S."/>
            <person name="Goodstadt L."/>
            <person name="Beatson S.A."/>
            <person name="Emes R.D."/>
            <person name="Winter E.E."/>
            <person name="Webber C."/>
            <person name="Brandt P."/>
            <person name="Nyakatura G."/>
            <person name="Adetobi M."/>
            <person name="Chiaromonte F."/>
            <person name="Elnitski L."/>
            <person name="Eswara P."/>
            <person name="Hardison R.C."/>
            <person name="Hou M."/>
            <person name="Kolbe D."/>
            <person name="Makova K."/>
            <person name="Miller W."/>
            <person name="Nekrutenko A."/>
            <person name="Riemer C."/>
            <person name="Schwartz S."/>
            <person name="Taylor J."/>
            <person name="Yang S."/>
            <person name="Zhang Y."/>
            <person name="Lindpaintner K."/>
            <person name="Andrews T.D."/>
            <person name="Caccamo M."/>
            <person name="Clamp M."/>
            <person name="Clarke L."/>
            <person name="Curwen V."/>
            <person name="Durbin R.M."/>
            <person name="Eyras E."/>
            <person name="Searle S.M."/>
            <person name="Cooper G.M."/>
            <person name="Batzoglou S."/>
            <person name="Brudno M."/>
            <person name="Sidow A."/>
            <person name="Stone E.A."/>
            <person name="Payseur B.A."/>
            <person name="Bourque G."/>
            <person name="Lopez-Otin C."/>
            <person name="Puente X.S."/>
            <person name="Chakrabarti K."/>
            <person name="Chatterji S."/>
            <person name="Dewey C."/>
            <person name="Pachter L."/>
            <person name="Bray N."/>
            <person name="Yap V.B."/>
            <person name="Caspi A."/>
            <person name="Tesler G."/>
            <person name="Pevzner P.A."/>
            <person name="Haussler D."/>
            <person name="Roskin K.M."/>
            <person name="Baertsch R."/>
            <person name="Clawson H."/>
            <person name="Furey T.S."/>
            <person name="Hinrichs A.S."/>
            <person name="Karolchik D."/>
            <person name="Kent W.J."/>
            <person name="Rosenbloom K.R."/>
            <person name="Trumbower H."/>
            <person name="Weirauch M."/>
            <person name="Cooper D.N."/>
            <person name="Stenson P.D."/>
            <person name="Ma B."/>
            <person name="Brent M."/>
            <person name="Arumugam M."/>
            <person name="Shteynberg D."/>
            <person name="Copley R.R."/>
            <person name="Taylor M.S."/>
            <person name="Riethman H."/>
            <person name="Mudunuri U."/>
            <person name="Peterson J."/>
            <person name="Guyer M."/>
            <person name="Felsenfeld A."/>
            <person name="Old S."/>
            <person name="Mockrin S."/>
            <person name="Collins F.S."/>
        </authorList>
    </citation>
    <scope>NUCLEOTIDE SEQUENCE [LARGE SCALE GENOMIC DNA]</scope>
    <scope>IDENTIFICATION</scope>
    <source>
        <strain>Brown Norway</strain>
    </source>
</reference>
<reference key="2">
    <citation type="journal article" date="2009" name="Biol. Chem.">
        <title>Expression and localization of atypical PKC isoforms in liver parenchymal cells.</title>
        <authorList>
            <person name="Stross C."/>
            <person name="Keitel V."/>
            <person name="Winands E."/>
            <person name="Haussinger D."/>
            <person name="Kubitz R."/>
        </authorList>
    </citation>
    <scope>NUCLEOTIDE SEQUENCE [MRNA] OF 10-596</scope>
    <source>
        <strain>Wistar</strain>
    </source>
</reference>
<reference key="3">
    <citation type="journal article" date="2002" name="J. Cell. Biochem.">
        <title>Phosphorylation of tyrosine 256 facilitates nuclear import of atypical protein kinase C.</title>
        <authorList>
            <person name="White W.O."/>
            <person name="Seibenhener M.L."/>
            <person name="Wooten M.W."/>
        </authorList>
    </citation>
    <scope>SUBCELLULAR LOCATION</scope>
    <scope>PHOSPHORYLATION AT TYR-265</scope>
    <scope>MUTAGENESIS OF TYR-265</scope>
</reference>
<reference key="4">
    <citation type="journal article" date="2012" name="Nat. Commun.">
        <title>Quantitative maps of protein phosphorylation sites across 14 different rat organs and tissues.</title>
        <authorList>
            <person name="Lundby A."/>
            <person name="Secher A."/>
            <person name="Lage K."/>
            <person name="Nordsborg N.B."/>
            <person name="Dmytriyev A."/>
            <person name="Lundby C."/>
            <person name="Olsen J.V."/>
        </authorList>
    </citation>
    <scope>PHOSPHORYLATION [LARGE SCALE ANALYSIS] AT THR-564</scope>
    <scope>IDENTIFICATION BY MASS SPECTROMETRY [LARGE SCALE ANALYSIS]</scope>
</reference>
<reference key="5">
    <citation type="journal article" date="2016" name="Cell Rep.">
        <title>Distinct Roles of PKCiota/lambda and PKMzeta in the Initiation and Maintenance of Hippocampal Long-Term Potentiation and Memory.</title>
        <authorList>
            <person name="Wang S."/>
            <person name="Sheng T."/>
            <person name="Ren S."/>
            <person name="Tian T."/>
            <person name="Lu W."/>
        </authorList>
    </citation>
    <scope>FUNCTION</scope>
    <scope>TISSUE SPECIFICITY</scope>
    <scope>PHOSPHORYLATION AT THR-564</scope>
    <scope>DISRUPTION PHENOTYPE</scope>
</reference>
<comment type="function">
    <text evidence="1 11">Calcium- and diacylglycerol-independent serine/ threonine-protein kinase that plays a general protective role against apoptotic stimuli, is involved in NF-kappa-B activation, cell survival, differentiation and polarity, and contributes to the regulation of microtubule dynamics in the early secretory pathway. Is necessary for BCR-ABL oncogene-mediated resistance to apoptotic drug in leukemia cells, protecting leukemia cells against drug-induced apoptosis. In cultured neurons, prevents amyloid beta protein-induced apoptosis by interrupting cell death process at a very early step. In glioblastoma cells, may function downstream of phosphatidylinositol 3-kinase (PI3K) and PDPK1 in the promotion of cell survival by phosphorylating and inhibiting the pro-apoptotic factor BAD. Can form a protein complex in non-small cell lung cancer (NSCLC) cells with PARD6A and ECT2 and regulate ECT2 oncogenic activity by phosphorylation, which in turn promotes transformed growth and invasion. In response to nerve growth factor (NGF), acts downstream of SRC to phosphorylate and activate IRAK1, allowing the subsequent activation of NF-kappa-B and neuronal cell survival. Functions in the organization of the apical domain in epithelial cells by phosphorylating EZR. This step is crucial for activation and normal distribution of EZR at the early stages of intestinal epithelial cell differentiation. Forms a protein complex with LLGL1 and PARD6B independently of PARD3 to regulate epithelial cell polarity. Plays a role in microtubule dynamics in the early secretory pathway through interaction with RAB2A and GAPDH and recruitment to vesicular tubular clusters (VTCs). In human coronary artery endothelial cells (HCAEC), is activated by saturated fatty acids and mediates lipid-induced apoptosis. Downstream of PI3K is required for insulin-stimulated glucose transport. Activates RAB4A and promotes its association with KIF3A which is required for the insulin-induced SLC2A4/GLUT4 translocation in adipocytes. Is essential in early embryogenesis and development of differentiating photoreceptors by playing a role in the establishment of epithelial and neuronal polarity (By similarity). Involved in early synaptic long term potentiation phase in CA1 hippocampal cells and short term memory formation (PubMed:27498875).</text>
</comment>
<comment type="catalytic activity">
    <reaction>
        <text>L-seryl-[protein] + ATP = O-phospho-L-seryl-[protein] + ADP + H(+)</text>
        <dbReference type="Rhea" id="RHEA:17989"/>
        <dbReference type="Rhea" id="RHEA-COMP:9863"/>
        <dbReference type="Rhea" id="RHEA-COMP:11604"/>
        <dbReference type="ChEBI" id="CHEBI:15378"/>
        <dbReference type="ChEBI" id="CHEBI:29999"/>
        <dbReference type="ChEBI" id="CHEBI:30616"/>
        <dbReference type="ChEBI" id="CHEBI:83421"/>
        <dbReference type="ChEBI" id="CHEBI:456216"/>
        <dbReference type="EC" id="2.7.11.13"/>
    </reaction>
</comment>
<comment type="catalytic activity">
    <reaction>
        <text>L-threonyl-[protein] + ATP = O-phospho-L-threonyl-[protein] + ADP + H(+)</text>
        <dbReference type="Rhea" id="RHEA:46608"/>
        <dbReference type="Rhea" id="RHEA-COMP:11060"/>
        <dbReference type="Rhea" id="RHEA-COMP:11605"/>
        <dbReference type="ChEBI" id="CHEBI:15378"/>
        <dbReference type="ChEBI" id="CHEBI:30013"/>
        <dbReference type="ChEBI" id="CHEBI:30616"/>
        <dbReference type="ChEBI" id="CHEBI:61977"/>
        <dbReference type="ChEBI" id="CHEBI:456216"/>
        <dbReference type="EC" id="2.7.11.13"/>
    </reaction>
</comment>
<comment type="activity regulation">
    <text evidence="1">Atypical PKCs (PRKCI and PRKCZ) exhibit an elevated basal enzymatic activity (that may be due to the interaction with SMG1 or SQSTM1) and are not regulated by diacylglycerol, phosphatidylserine, phorbol esters or calcium ions. Two specific sites, Thr-412 (activation loop of the kinase domain) and Thr-564 (turn motif), need to be phosphorylated for its full activation. Might also be a target for novel lipid activators that are elevated during nutrient-stimulated insulin secretion (By similarity).</text>
</comment>
<comment type="subunit">
    <text evidence="2 12">Forms a complex with SQSTM1 and MP2K5 (By similarity). Interacts directly with SQSTM1 (Probable). Interacts with IKBKB. Interacts with PARD6A, PARD6B and PARD6G. Part of a quaternary complex containing aPKC, PARD3, a PARD6 protein (PARD6A, PARD6B or PARD6G) and a GTPase protein (CDC42 or RAC1). Part of a complex with LLGL1 and PARD6B. Interacts with ADAP1/CENTA1. Interaction with SMG1, through the ZN-finger domain, activates the kinase activity. Interacts with CDK7. Forms a complex with RAB2A and GAPDH involved in recruitment onto the membrane of vesicular tubular clusters (VTCs). Interacts with ECT2 ('Thr-359' phosphorylated form). Interacts with VAMP2. Interacts with WDFY2 (via WD repeats 1-3) (By similarity).</text>
</comment>
<comment type="interaction">
    <interactant intactId="EBI-8795211">
        <id>F1M7Y5</id>
    </interactant>
    <interactant intactId="EBI-6959516">
        <id>Q62824</id>
        <label>Exoc4</label>
    </interactant>
    <organismsDiffer>false</organismsDiffer>
    <experiments>2</experiments>
</comment>
<comment type="subcellular location">
    <subcellularLocation>
        <location evidence="10">Cytoplasm</location>
    </subcellularLocation>
    <subcellularLocation>
        <location evidence="2">Membrane</location>
    </subcellularLocation>
    <subcellularLocation>
        <location evidence="2">Endosome</location>
    </subcellularLocation>
    <subcellularLocation>
        <location evidence="10">Nucleus</location>
    </subcellularLocation>
    <text evidence="2">Transported into the endosome through interaction with SQSTM1/p62. After phosphorylation by SRC, transported into the nucleus through interaction with KPNB1. Colocalizes with CDK7 in the cytoplasm and nucleus. Transported to vesicular tubular clusters (VTCs) through interaction with RAB2A.</text>
</comment>
<comment type="tissue specificity">
    <text evidence="11">Expressed in dorsal hippocampus (at protein level).</text>
</comment>
<comment type="domain">
    <text evidence="1">The PB1 domain mediates interaction with SQSTM1.</text>
</comment>
<comment type="domain">
    <text evidence="1">The C1 zinc finger does not bind diacylglycerol (DAG).</text>
</comment>
<comment type="domain">
    <text evidence="1">The pseudosubstrate motif resembles the sequence around sites phosphorylated on target proteins, except the presence of a non-phosphorylatable residue in place of Ser, it modulates activity by competing with substrates.</text>
</comment>
<comment type="PTM">
    <text evidence="2 3 10 11">Phosphorylation at Thr-412 in the activation loop is not mandatory for activation (By similarity). Upon neuronal growth factor (NGF) stimulation, phosphorylated by SRC at Tyr-265, Tyr-280 and Tyr-334 (By similarity). Phosphorylation at Tyr-265 facilitates binding to KPNB1/importin-beta regulating entry of PRKCI into the nucleus (PubMed:11891849). Phosphorylation on Tyr-334 is important for NF-kappa-B stimulation (By similarity). Phosphorylated at Thr-564 during the initial phase of long term potentiation (PubMed:27498875).</text>
</comment>
<comment type="disruption phenotype">
    <text evidence="11">RNAi-mediated knockdown in the dorsal hippocampus impairs the early phase of long-term potentiation and the formation of short term memory.</text>
</comment>
<comment type="similarity">
    <text evidence="12">Belongs to the protein kinase superfamily. AGC Ser/Thr protein kinase family. PKC subfamily.</text>
</comment>
<proteinExistence type="evidence at protein level"/>
<sequence>MPTQRDSSTMSHTVACGGGGDHSHQVRVKAYYRGDIMITHFEPSISFEGLCSEVRDMCSFDNEQPFTMKWIDEEGDPCTVSSQLELEEAFRLYELNKDSELLIHVFPCVPERPGMPCPGEDKSIYRRGARRWRKLYCANGHTFQAKRFNRRAHCAICTDRIWGLGRQGYKCINCKLLVHKKCHKLVTIECGRHSLPPEPMMPMDQSSMHPDHTQTVIPYNPSSHESLDQVGEEKEAMNTRESGKASSSLGLQDFDLLRVIGRGSYAKVLLVRLKKTDRIYAMKVVKKELVNDDEDIDWVQTEKHVFEQASNHPFLVGLHSCFQTESRLFFVIEYVNGGDLMFHMQRQRKLPEEHARFYSAEISLALNYLHERGIIYRDLKLDNVLLDSEGHIKLTDYGMCKEGLRPGDTTSTFCGTPNYIAPEILRGEDYGFSVDWWALGVLMFEMMAGRSPFDIVGSSDNPDQNTEDYLFQVILEKQIRIPRSLSVKAASVLKSFLNKDPKERLGCHPQTGFADIQGHPFFRNVDWDMMEQKQVVPPFKPNISGEFGLDNFDSQFTNEPVQLTPDDDDIVRKIDQSEFEGFEYINPLLMSAEECV</sequence>
<organism>
    <name type="scientific">Rattus norvegicus</name>
    <name type="common">Rat</name>
    <dbReference type="NCBI Taxonomy" id="10116"/>
    <lineage>
        <taxon>Eukaryota</taxon>
        <taxon>Metazoa</taxon>
        <taxon>Chordata</taxon>
        <taxon>Craniata</taxon>
        <taxon>Vertebrata</taxon>
        <taxon>Euteleostomi</taxon>
        <taxon>Mammalia</taxon>
        <taxon>Eutheria</taxon>
        <taxon>Euarchontoglires</taxon>
        <taxon>Glires</taxon>
        <taxon>Rodentia</taxon>
        <taxon>Myomorpha</taxon>
        <taxon>Muroidea</taxon>
        <taxon>Muridae</taxon>
        <taxon>Murinae</taxon>
        <taxon>Rattus</taxon>
    </lineage>
</organism>
<protein>
    <recommendedName>
        <fullName>Protein kinase C iota type</fullName>
        <ecNumber>2.7.11.13</ecNumber>
    </recommendedName>
    <alternativeName>
        <fullName>Atypical protein kinase C-lambda/iota</fullName>
        <shortName>aPKC-lambda/iota</shortName>
    </alternativeName>
    <alternativeName>
        <fullName>nPKC-iota</fullName>
    </alternativeName>
</protein>
<name>KPCI_RAT</name>
<feature type="initiator methionine" description="Removed" evidence="2">
    <location>
        <position position="1"/>
    </location>
</feature>
<feature type="chain" id="PRO_0000414090" description="Protein kinase C iota type">
    <location>
        <begin position="2"/>
        <end position="596"/>
    </location>
</feature>
<feature type="domain" description="PB1" evidence="7">
    <location>
        <begin position="25"/>
        <end position="108"/>
    </location>
</feature>
<feature type="domain" description="Protein kinase" evidence="4">
    <location>
        <begin position="254"/>
        <end position="522"/>
    </location>
</feature>
<feature type="domain" description="AGC-kinase C-terminal" evidence="6">
    <location>
        <begin position="523"/>
        <end position="594"/>
    </location>
</feature>
<feature type="zinc finger region" description="Phorbol-ester/DAG-type" evidence="5">
    <location>
        <begin position="140"/>
        <end position="190"/>
    </location>
</feature>
<feature type="region of interest" description="Disordered" evidence="9">
    <location>
        <begin position="1"/>
        <end position="21"/>
    </location>
</feature>
<feature type="region of interest" description="Regulatory domain" evidence="1">
    <location>
        <begin position="2"/>
        <end position="253"/>
    </location>
</feature>
<feature type="region of interest" description="Required for interaction with RAB2" evidence="1">
    <location>
        <begin position="2"/>
        <end position="28"/>
    </location>
</feature>
<feature type="region of interest" description="Interaction with PARD6A" evidence="1">
    <location>
        <begin position="72"/>
        <end position="91"/>
    </location>
</feature>
<feature type="short sequence motif" description="Pseudosubstrate" evidence="1">
    <location>
        <begin position="125"/>
        <end position="134"/>
    </location>
</feature>
<feature type="compositionally biased region" description="Polar residues" evidence="9">
    <location>
        <begin position="1"/>
        <end position="12"/>
    </location>
</feature>
<feature type="active site" description="Proton acceptor" evidence="4 8">
    <location>
        <position position="378"/>
    </location>
</feature>
<feature type="binding site" evidence="4">
    <location>
        <begin position="260"/>
        <end position="268"/>
    </location>
    <ligand>
        <name>ATP</name>
        <dbReference type="ChEBI" id="CHEBI:30616"/>
    </ligand>
</feature>
<feature type="binding site" evidence="4">
    <location>
        <position position="283"/>
    </location>
    <ligand>
        <name>ATP</name>
        <dbReference type="ChEBI" id="CHEBI:30616"/>
    </ligand>
</feature>
<feature type="modified residue" description="N-acetylproline" evidence="2">
    <location>
        <position position="2"/>
    </location>
</feature>
<feature type="modified residue" description="Phosphothreonine" evidence="2">
    <location>
        <position position="3"/>
    </location>
</feature>
<feature type="modified residue" description="Phosphoserine" evidence="2">
    <location>
        <position position="7"/>
    </location>
</feature>
<feature type="modified residue" description="Phosphoserine" evidence="2">
    <location>
        <position position="8"/>
    </location>
</feature>
<feature type="modified residue" description="Phosphothreonine" evidence="2">
    <location>
        <position position="9"/>
    </location>
</feature>
<feature type="modified residue" description="Phosphotyrosine; by SRC" evidence="10">
    <location>
        <position position="265"/>
    </location>
</feature>
<feature type="modified residue" description="Phosphotyrosine; by SRC" evidence="2">
    <location>
        <position position="280"/>
    </location>
</feature>
<feature type="modified residue" description="Phosphotyrosine; by SRC" evidence="2">
    <location>
        <position position="334"/>
    </location>
</feature>
<feature type="modified residue" description="Phosphothreonine; by PDPK1" evidence="2">
    <location>
        <position position="412"/>
    </location>
</feature>
<feature type="modified residue" description="Phosphothreonine" evidence="11 13">
    <location>
        <position position="564"/>
    </location>
</feature>
<feature type="mutagenesis site" description="Loss of phosphorylation and nuclear import." evidence="10">
    <original>Y</original>
    <variation>F</variation>
    <location>
        <position position="265"/>
    </location>
</feature>
<feature type="sequence conflict" description="In Ref. 2; ACA66272." evidence="12" ref="2">
    <original>C</original>
    <variation>R</variation>
    <location>
        <position position="171"/>
    </location>
</feature>
<dbReference type="EC" id="2.7.11.13"/>
<dbReference type="EMBL" id="EU517502">
    <property type="protein sequence ID" value="ACA66272.1"/>
    <property type="molecule type" value="mRNA"/>
</dbReference>
<dbReference type="RefSeq" id="NP_114448.1">
    <property type="nucleotide sequence ID" value="NM_032059.1"/>
</dbReference>
<dbReference type="SMR" id="F1M7Y5"/>
<dbReference type="BioGRID" id="249872">
    <property type="interactions" value="4"/>
</dbReference>
<dbReference type="CORUM" id="F1M7Y5"/>
<dbReference type="FunCoup" id="F1M7Y5">
    <property type="interactions" value="3356"/>
</dbReference>
<dbReference type="IntAct" id="F1M7Y5">
    <property type="interactions" value="3"/>
</dbReference>
<dbReference type="MINT" id="F1M7Y5"/>
<dbReference type="STRING" id="10116.ENSRNOP00000012924"/>
<dbReference type="iPTMnet" id="F1M7Y5"/>
<dbReference type="PhosphoSitePlus" id="F1M7Y5"/>
<dbReference type="jPOST" id="F1M7Y5"/>
<dbReference type="PaxDb" id="10116-ENSRNOP00000012924"/>
<dbReference type="Ensembl" id="ENSRNOT00000012924.6">
    <property type="protein sequence ID" value="ENSRNOP00000012924.4"/>
    <property type="gene ID" value="ENSRNOG00000009652.6"/>
</dbReference>
<dbReference type="GeneID" id="84006"/>
<dbReference type="KEGG" id="rno:84006"/>
<dbReference type="UCSC" id="RGD:620961">
    <property type="organism name" value="rat"/>
</dbReference>
<dbReference type="AGR" id="RGD:620961"/>
<dbReference type="CTD" id="5584"/>
<dbReference type="RGD" id="620961">
    <property type="gene designation" value="Prkci"/>
</dbReference>
<dbReference type="eggNOG" id="KOG0695">
    <property type="taxonomic scope" value="Eukaryota"/>
</dbReference>
<dbReference type="GeneTree" id="ENSGT00940000153497"/>
<dbReference type="HOGENOM" id="CLU_000288_63_29_1"/>
<dbReference type="InParanoid" id="F1M7Y5"/>
<dbReference type="OMA" id="FTIKWID"/>
<dbReference type="OrthoDB" id="63267at2759"/>
<dbReference type="TreeFam" id="TF102004"/>
<dbReference type="Reactome" id="R-RNO-1912408">
    <property type="pathway name" value="Pre-NOTCH Transcription and Translation"/>
</dbReference>
<dbReference type="Reactome" id="R-RNO-209543">
    <property type="pathway name" value="p75NTR recruits signalling complexes"/>
</dbReference>
<dbReference type="Reactome" id="R-RNO-420029">
    <property type="pathway name" value="Tight junction interactions"/>
</dbReference>
<dbReference type="Reactome" id="R-RNO-9755511">
    <property type="pathway name" value="KEAP1-NFE2L2 pathway"/>
</dbReference>
<dbReference type="PRO" id="PR:F1M7Y5"/>
<dbReference type="Proteomes" id="UP000002494">
    <property type="component" value="Chromosome 2"/>
</dbReference>
<dbReference type="Bgee" id="ENSRNOG00000009652">
    <property type="expression patterns" value="Expressed in stomach and 20 other cell types or tissues"/>
</dbReference>
<dbReference type="GO" id="GO:0045177">
    <property type="term" value="C:apical part of cell"/>
    <property type="evidence" value="ECO:0000266"/>
    <property type="project" value="RGD"/>
</dbReference>
<dbReference type="GO" id="GO:0016324">
    <property type="term" value="C:apical plasma membrane"/>
    <property type="evidence" value="ECO:0000266"/>
    <property type="project" value="RGD"/>
</dbReference>
<dbReference type="GO" id="GO:0005923">
    <property type="term" value="C:bicellular tight junction"/>
    <property type="evidence" value="ECO:0000314"/>
    <property type="project" value="RGD"/>
</dbReference>
<dbReference type="GO" id="GO:0005903">
    <property type="term" value="C:brush border"/>
    <property type="evidence" value="ECO:0000266"/>
    <property type="project" value="RGD"/>
</dbReference>
<dbReference type="GO" id="GO:0031252">
    <property type="term" value="C:cell leading edge"/>
    <property type="evidence" value="ECO:0000314"/>
    <property type="project" value="RGD"/>
</dbReference>
<dbReference type="GO" id="GO:0005929">
    <property type="term" value="C:cilium"/>
    <property type="evidence" value="ECO:0007669"/>
    <property type="project" value="Ensembl"/>
</dbReference>
<dbReference type="GO" id="GO:0005737">
    <property type="term" value="C:cytoplasm"/>
    <property type="evidence" value="ECO:0000266"/>
    <property type="project" value="RGD"/>
</dbReference>
<dbReference type="GO" id="GO:0005829">
    <property type="term" value="C:cytosol"/>
    <property type="evidence" value="ECO:0000250"/>
    <property type="project" value="UniProtKB"/>
</dbReference>
<dbReference type="GO" id="GO:0005768">
    <property type="term" value="C:endosome"/>
    <property type="evidence" value="ECO:0007669"/>
    <property type="project" value="UniProtKB-SubCell"/>
</dbReference>
<dbReference type="GO" id="GO:0098978">
    <property type="term" value="C:glutamatergic synapse"/>
    <property type="evidence" value="ECO:0000314"/>
    <property type="project" value="SynGO"/>
</dbReference>
<dbReference type="GO" id="GO:0000139">
    <property type="term" value="C:Golgi membrane"/>
    <property type="evidence" value="ECO:0007669"/>
    <property type="project" value="GOC"/>
</dbReference>
<dbReference type="GO" id="GO:0045171">
    <property type="term" value="C:intercellular bridge"/>
    <property type="evidence" value="ECO:0007669"/>
    <property type="project" value="Ensembl"/>
</dbReference>
<dbReference type="GO" id="GO:0015630">
    <property type="term" value="C:microtubule cytoskeleton"/>
    <property type="evidence" value="ECO:0007669"/>
    <property type="project" value="Ensembl"/>
</dbReference>
<dbReference type="GO" id="GO:0005634">
    <property type="term" value="C:nucleus"/>
    <property type="evidence" value="ECO:0000250"/>
    <property type="project" value="UniProtKB"/>
</dbReference>
<dbReference type="GO" id="GO:0120157">
    <property type="term" value="C:PAR polarity complex"/>
    <property type="evidence" value="ECO:0000266"/>
    <property type="project" value="RGD"/>
</dbReference>
<dbReference type="GO" id="GO:0098685">
    <property type="term" value="C:Schaffer collateral - CA1 synapse"/>
    <property type="evidence" value="ECO:0000314"/>
    <property type="project" value="SynGO"/>
</dbReference>
<dbReference type="GO" id="GO:0043220">
    <property type="term" value="C:Schmidt-Lanterman incisure"/>
    <property type="evidence" value="ECO:0000266"/>
    <property type="project" value="RGD"/>
</dbReference>
<dbReference type="GO" id="GO:0005524">
    <property type="term" value="F:ATP binding"/>
    <property type="evidence" value="ECO:0007669"/>
    <property type="project" value="UniProtKB-KW"/>
</dbReference>
<dbReference type="GO" id="GO:0004697">
    <property type="term" value="F:diacylglycerol-dependent serine/threonine kinase activity"/>
    <property type="evidence" value="ECO:0000266"/>
    <property type="project" value="RGD"/>
</dbReference>
<dbReference type="GO" id="GO:0004699">
    <property type="term" value="F:diacylglycerol-dependent, calcium-independent serine/threonine kinase activity"/>
    <property type="evidence" value="ECO:0000266"/>
    <property type="project" value="RGD"/>
</dbReference>
<dbReference type="GO" id="GO:0005543">
    <property type="term" value="F:phospholipid binding"/>
    <property type="evidence" value="ECO:0000266"/>
    <property type="project" value="RGD"/>
</dbReference>
<dbReference type="GO" id="GO:0004672">
    <property type="term" value="F:protein kinase activity"/>
    <property type="evidence" value="ECO:0000250"/>
    <property type="project" value="UniProtKB"/>
</dbReference>
<dbReference type="GO" id="GO:0106310">
    <property type="term" value="F:protein serine kinase activity"/>
    <property type="evidence" value="ECO:0007669"/>
    <property type="project" value="RHEA"/>
</dbReference>
<dbReference type="GO" id="GO:0004674">
    <property type="term" value="F:protein serine/threonine kinase activity"/>
    <property type="evidence" value="ECO:0000266"/>
    <property type="project" value="RGD"/>
</dbReference>
<dbReference type="GO" id="GO:0008270">
    <property type="term" value="F:zinc ion binding"/>
    <property type="evidence" value="ECO:0007669"/>
    <property type="project" value="UniProtKB-KW"/>
</dbReference>
<dbReference type="GO" id="GO:0007015">
    <property type="term" value="P:actin filament organization"/>
    <property type="evidence" value="ECO:0000266"/>
    <property type="project" value="RGD"/>
</dbReference>
<dbReference type="GO" id="GO:0016477">
    <property type="term" value="P:cell migration"/>
    <property type="evidence" value="ECO:0000315"/>
    <property type="project" value="RGD"/>
</dbReference>
<dbReference type="GO" id="GO:0045216">
    <property type="term" value="P:cell-cell junction organization"/>
    <property type="evidence" value="ECO:0000266"/>
    <property type="project" value="RGD"/>
</dbReference>
<dbReference type="GO" id="GO:0032869">
    <property type="term" value="P:cellular response to insulin stimulus"/>
    <property type="evidence" value="ECO:0000315"/>
    <property type="project" value="RGD"/>
</dbReference>
<dbReference type="GO" id="GO:0035089">
    <property type="term" value="P:establishment of apical/basal cell polarity"/>
    <property type="evidence" value="ECO:0000266"/>
    <property type="project" value="RGD"/>
</dbReference>
<dbReference type="GO" id="GO:0030010">
    <property type="term" value="P:establishment of cell polarity"/>
    <property type="evidence" value="ECO:0000318"/>
    <property type="project" value="GO_Central"/>
</dbReference>
<dbReference type="GO" id="GO:0045197">
    <property type="term" value="P:establishment or maintenance of epithelial cell apical/basal polarity"/>
    <property type="evidence" value="ECO:0000266"/>
    <property type="project" value="RGD"/>
</dbReference>
<dbReference type="GO" id="GO:0042462">
    <property type="term" value="P:eye photoreceptor cell development"/>
    <property type="evidence" value="ECO:0000266"/>
    <property type="project" value="RGD"/>
</dbReference>
<dbReference type="GO" id="GO:0048194">
    <property type="term" value="P:Golgi vesicle budding"/>
    <property type="evidence" value="ECO:0000314"/>
    <property type="project" value="RGD"/>
</dbReference>
<dbReference type="GO" id="GO:0035556">
    <property type="term" value="P:intracellular signal transduction"/>
    <property type="evidence" value="ECO:0000318"/>
    <property type="project" value="GO_Central"/>
</dbReference>
<dbReference type="GO" id="GO:0034351">
    <property type="term" value="P:negative regulation of glial cell apoptotic process"/>
    <property type="evidence" value="ECO:0000250"/>
    <property type="project" value="UniProtKB"/>
</dbReference>
<dbReference type="GO" id="GO:0043524">
    <property type="term" value="P:negative regulation of neuron apoptotic process"/>
    <property type="evidence" value="ECO:0000250"/>
    <property type="project" value="UniProtKB"/>
</dbReference>
<dbReference type="GO" id="GO:0046326">
    <property type="term" value="P:positive regulation of D-glucose import"/>
    <property type="evidence" value="ECO:0000266"/>
    <property type="project" value="RGD"/>
</dbReference>
<dbReference type="GO" id="GO:2000353">
    <property type="term" value="P:positive regulation of endothelial cell apoptotic process"/>
    <property type="evidence" value="ECO:0000250"/>
    <property type="project" value="UniProtKB"/>
</dbReference>
<dbReference type="GO" id="GO:0060252">
    <property type="term" value="P:positive regulation of glial cell proliferation"/>
    <property type="evidence" value="ECO:0000250"/>
    <property type="project" value="UniProtKB"/>
</dbReference>
<dbReference type="GO" id="GO:0010976">
    <property type="term" value="P:positive regulation of neuron projection development"/>
    <property type="evidence" value="ECO:0000250"/>
    <property type="project" value="UniProtKB"/>
</dbReference>
<dbReference type="GO" id="GO:0051092">
    <property type="term" value="P:positive regulation of NF-kappaB transcription factor activity"/>
    <property type="evidence" value="ECO:0000250"/>
    <property type="project" value="UniProtKB"/>
</dbReference>
<dbReference type="GO" id="GO:1903078">
    <property type="term" value="P:positive regulation of protein localization to plasma membrane"/>
    <property type="evidence" value="ECO:0000266"/>
    <property type="project" value="RGD"/>
</dbReference>
<dbReference type="GO" id="GO:0072659">
    <property type="term" value="P:protein localization to plasma membrane"/>
    <property type="evidence" value="ECO:0000318"/>
    <property type="project" value="GO_Central"/>
</dbReference>
<dbReference type="GO" id="GO:0099072">
    <property type="term" value="P:regulation of postsynaptic membrane neurotransmitter receptor levels"/>
    <property type="evidence" value="ECO:0000314"/>
    <property type="project" value="SynGO"/>
</dbReference>
<dbReference type="GO" id="GO:0070555">
    <property type="term" value="P:response to interleukin-1"/>
    <property type="evidence" value="ECO:0000315"/>
    <property type="project" value="RGD"/>
</dbReference>
<dbReference type="GO" id="GO:0043434">
    <property type="term" value="P:response to peptide hormone"/>
    <property type="evidence" value="ECO:0000314"/>
    <property type="project" value="RGD"/>
</dbReference>
<dbReference type="CDD" id="cd20794">
    <property type="entry name" value="C1_aPKC"/>
    <property type="match status" value="1"/>
</dbReference>
<dbReference type="CDD" id="cd06404">
    <property type="entry name" value="PB1_aPKC"/>
    <property type="match status" value="1"/>
</dbReference>
<dbReference type="CDD" id="cd05618">
    <property type="entry name" value="STKc_aPKC_iota"/>
    <property type="match status" value="1"/>
</dbReference>
<dbReference type="FunFam" id="1.10.510.10:FF:000048">
    <property type="entry name" value="Protein kinase C"/>
    <property type="match status" value="1"/>
</dbReference>
<dbReference type="FunFam" id="3.10.20.90:FF:000071">
    <property type="entry name" value="Protein kinase C"/>
    <property type="match status" value="1"/>
</dbReference>
<dbReference type="FunFam" id="3.30.200.20:FF:000070">
    <property type="entry name" value="Protein kinase C"/>
    <property type="match status" value="1"/>
</dbReference>
<dbReference type="FunFam" id="3.30.60.20:FF:000012">
    <property type="entry name" value="Protein kinase C"/>
    <property type="match status" value="1"/>
</dbReference>
<dbReference type="Gene3D" id="3.30.60.20">
    <property type="match status" value="1"/>
</dbReference>
<dbReference type="Gene3D" id="3.10.20.90">
    <property type="entry name" value="Phosphatidylinositol 3-kinase Catalytic Subunit, Chain A, domain 1"/>
    <property type="match status" value="1"/>
</dbReference>
<dbReference type="Gene3D" id="3.30.200.20">
    <property type="entry name" value="Phosphorylase Kinase, domain 1"/>
    <property type="match status" value="1"/>
</dbReference>
<dbReference type="Gene3D" id="1.10.510.10">
    <property type="entry name" value="Transferase(Phosphotransferase) domain 1"/>
    <property type="match status" value="1"/>
</dbReference>
<dbReference type="InterPro" id="IPR000961">
    <property type="entry name" value="AGC-kinase_C"/>
</dbReference>
<dbReference type="InterPro" id="IPR034661">
    <property type="entry name" value="aPKC_iota"/>
</dbReference>
<dbReference type="InterPro" id="IPR046349">
    <property type="entry name" value="C1-like_sf"/>
</dbReference>
<dbReference type="InterPro" id="IPR020454">
    <property type="entry name" value="DAG/PE-bd"/>
</dbReference>
<dbReference type="InterPro" id="IPR011009">
    <property type="entry name" value="Kinase-like_dom_sf"/>
</dbReference>
<dbReference type="InterPro" id="IPR053793">
    <property type="entry name" value="PB1-like"/>
</dbReference>
<dbReference type="InterPro" id="IPR034877">
    <property type="entry name" value="PB1_aPKC"/>
</dbReference>
<dbReference type="InterPro" id="IPR000270">
    <property type="entry name" value="PB1_dom"/>
</dbReference>
<dbReference type="InterPro" id="IPR002219">
    <property type="entry name" value="PE/DAG-bd"/>
</dbReference>
<dbReference type="InterPro" id="IPR012233">
    <property type="entry name" value="PKC"/>
</dbReference>
<dbReference type="InterPro" id="IPR017892">
    <property type="entry name" value="Pkinase_C"/>
</dbReference>
<dbReference type="InterPro" id="IPR000719">
    <property type="entry name" value="Prot_kinase_dom"/>
</dbReference>
<dbReference type="InterPro" id="IPR017441">
    <property type="entry name" value="Protein_kinase_ATP_BS"/>
</dbReference>
<dbReference type="InterPro" id="IPR008271">
    <property type="entry name" value="Ser/Thr_kinase_AS"/>
</dbReference>
<dbReference type="PANTHER" id="PTHR24351">
    <property type="entry name" value="RIBOSOMAL PROTEIN S6 KINASE"/>
    <property type="match status" value="1"/>
</dbReference>
<dbReference type="Pfam" id="PF00130">
    <property type="entry name" value="C1_1"/>
    <property type="match status" value="1"/>
</dbReference>
<dbReference type="Pfam" id="PF00564">
    <property type="entry name" value="PB1"/>
    <property type="match status" value="1"/>
</dbReference>
<dbReference type="Pfam" id="PF00069">
    <property type="entry name" value="Pkinase"/>
    <property type="match status" value="1"/>
</dbReference>
<dbReference type="Pfam" id="PF00433">
    <property type="entry name" value="Pkinase_C"/>
    <property type="match status" value="1"/>
</dbReference>
<dbReference type="PIRSF" id="PIRSF000554">
    <property type="entry name" value="PKC_zeta"/>
    <property type="match status" value="1"/>
</dbReference>
<dbReference type="PRINTS" id="PR00008">
    <property type="entry name" value="DAGPEDOMAIN"/>
</dbReference>
<dbReference type="SMART" id="SM00109">
    <property type="entry name" value="C1"/>
    <property type="match status" value="1"/>
</dbReference>
<dbReference type="SMART" id="SM00666">
    <property type="entry name" value="PB1"/>
    <property type="match status" value="1"/>
</dbReference>
<dbReference type="SMART" id="SM00133">
    <property type="entry name" value="S_TK_X"/>
    <property type="match status" value="1"/>
</dbReference>
<dbReference type="SMART" id="SM00220">
    <property type="entry name" value="S_TKc"/>
    <property type="match status" value="1"/>
</dbReference>
<dbReference type="SUPFAM" id="SSF54277">
    <property type="entry name" value="CAD &amp; PB1 domains"/>
    <property type="match status" value="1"/>
</dbReference>
<dbReference type="SUPFAM" id="SSF57889">
    <property type="entry name" value="Cysteine-rich domain"/>
    <property type="match status" value="1"/>
</dbReference>
<dbReference type="SUPFAM" id="SSF56112">
    <property type="entry name" value="Protein kinase-like (PK-like)"/>
    <property type="match status" value="1"/>
</dbReference>
<dbReference type="PROSITE" id="PS51285">
    <property type="entry name" value="AGC_KINASE_CTER"/>
    <property type="match status" value="1"/>
</dbReference>
<dbReference type="PROSITE" id="PS51745">
    <property type="entry name" value="PB1"/>
    <property type="match status" value="1"/>
</dbReference>
<dbReference type="PROSITE" id="PS00107">
    <property type="entry name" value="PROTEIN_KINASE_ATP"/>
    <property type="match status" value="1"/>
</dbReference>
<dbReference type="PROSITE" id="PS50011">
    <property type="entry name" value="PROTEIN_KINASE_DOM"/>
    <property type="match status" value="1"/>
</dbReference>
<dbReference type="PROSITE" id="PS00108">
    <property type="entry name" value="PROTEIN_KINASE_ST"/>
    <property type="match status" value="1"/>
</dbReference>
<dbReference type="PROSITE" id="PS00479">
    <property type="entry name" value="ZF_DAG_PE_1"/>
    <property type="match status" value="1"/>
</dbReference>
<dbReference type="PROSITE" id="PS50081">
    <property type="entry name" value="ZF_DAG_PE_2"/>
    <property type="match status" value="1"/>
</dbReference>